<sequence length="286" mass="31026">MKNILSIQSHVVFGHAGNSAAEFPMRRMGANVWPLNTVQFSNHTQYGHWTGCVMPASHLTEVVQGIANIDKLKTCNAVLSGYIGSAEQGEHILGIVRQVKAANPDALYFCDPVMGTPEKGCIVAPGVSDFHCQQSLLAADIVAPNLPELELLGGRTVHNVAEAVETARALCEKGPKIVLVKHLSRAASREDSFEMLLVTPTDAWHISRPLVEFERQPVGVGDLTSGLLLVNLLKGVALDKALEHTTAAVYEVMLVTKEMNEYELQLVAAQDGIANPRHHFQAVRLS</sequence>
<organism>
    <name type="scientific">Pectobacterium atrosepticum (strain SCRI 1043 / ATCC BAA-672)</name>
    <name type="common">Erwinia carotovora subsp. atroseptica</name>
    <dbReference type="NCBI Taxonomy" id="218491"/>
    <lineage>
        <taxon>Bacteria</taxon>
        <taxon>Pseudomonadati</taxon>
        <taxon>Pseudomonadota</taxon>
        <taxon>Gammaproteobacteria</taxon>
        <taxon>Enterobacterales</taxon>
        <taxon>Pectobacteriaceae</taxon>
        <taxon>Pectobacterium</taxon>
    </lineage>
</organism>
<keyword id="KW-0067">ATP-binding</keyword>
<keyword id="KW-0418">Kinase</keyword>
<keyword id="KW-0460">Magnesium</keyword>
<keyword id="KW-0547">Nucleotide-binding</keyword>
<keyword id="KW-1185">Reference proteome</keyword>
<keyword id="KW-0808">Transferase</keyword>
<protein>
    <recommendedName>
        <fullName evidence="1">Pyridoxal kinase PdxY</fullName>
        <shortName evidence="1">PL kinase</shortName>
        <ecNumber evidence="1">2.7.1.35</ecNumber>
    </recommendedName>
</protein>
<proteinExistence type="inferred from homology"/>
<comment type="function">
    <text evidence="1">Pyridoxal kinase involved in the salvage pathway of pyridoxal 5'-phosphate (PLP). Catalyzes the phosphorylation of pyridoxal to PLP.</text>
</comment>
<comment type="catalytic activity">
    <reaction evidence="1">
        <text>pyridoxal + ATP = pyridoxal 5'-phosphate + ADP + H(+)</text>
        <dbReference type="Rhea" id="RHEA:10224"/>
        <dbReference type="ChEBI" id="CHEBI:15378"/>
        <dbReference type="ChEBI" id="CHEBI:17310"/>
        <dbReference type="ChEBI" id="CHEBI:30616"/>
        <dbReference type="ChEBI" id="CHEBI:456216"/>
        <dbReference type="ChEBI" id="CHEBI:597326"/>
        <dbReference type="EC" id="2.7.1.35"/>
    </reaction>
</comment>
<comment type="cofactor">
    <cofactor evidence="1">
        <name>Mg(2+)</name>
        <dbReference type="ChEBI" id="CHEBI:18420"/>
    </cofactor>
</comment>
<comment type="pathway">
    <text evidence="1">Cofactor metabolism; pyridoxal 5'-phosphate salvage; pyridoxal 5'-phosphate from pyridoxal: step 1/1.</text>
</comment>
<comment type="subunit">
    <text evidence="1">Homodimer.</text>
</comment>
<comment type="similarity">
    <text evidence="1">Belongs to the pyridoxine kinase family. PdxY subfamily.</text>
</comment>
<name>PDXY_PECAS</name>
<feature type="chain" id="PRO_0000269806" description="Pyridoxal kinase PdxY">
    <location>
        <begin position="1"/>
        <end position="286"/>
    </location>
</feature>
<feature type="binding site" evidence="1">
    <location>
        <position position="9"/>
    </location>
    <ligand>
        <name>substrate</name>
    </ligand>
</feature>
<feature type="binding site" evidence="1">
    <location>
        <begin position="44"/>
        <end position="45"/>
    </location>
    <ligand>
        <name>substrate</name>
    </ligand>
</feature>
<feature type="binding site" evidence="1">
    <location>
        <position position="111"/>
    </location>
    <ligand>
        <name>ATP</name>
        <dbReference type="ChEBI" id="CHEBI:30616"/>
    </ligand>
</feature>
<feature type="binding site" evidence="1">
    <location>
        <position position="143"/>
    </location>
    <ligand>
        <name>ATP</name>
        <dbReference type="ChEBI" id="CHEBI:30616"/>
    </ligand>
</feature>
<feature type="binding site" evidence="1">
    <location>
        <position position="148"/>
    </location>
    <ligand>
        <name>ATP</name>
        <dbReference type="ChEBI" id="CHEBI:30616"/>
    </ligand>
</feature>
<feature type="binding site" evidence="1">
    <location>
        <position position="181"/>
    </location>
    <ligand>
        <name>ATP</name>
        <dbReference type="ChEBI" id="CHEBI:30616"/>
    </ligand>
</feature>
<feature type="binding site" evidence="1">
    <location>
        <begin position="208"/>
        <end position="211"/>
    </location>
    <ligand>
        <name>ATP</name>
        <dbReference type="ChEBI" id="CHEBI:30616"/>
    </ligand>
</feature>
<feature type="binding site" evidence="1">
    <location>
        <position position="222"/>
    </location>
    <ligand>
        <name>substrate</name>
    </ligand>
</feature>
<evidence type="ECO:0000255" key="1">
    <source>
        <dbReference type="HAMAP-Rule" id="MF_01639"/>
    </source>
</evidence>
<accession>Q6D5V1</accession>
<reference key="1">
    <citation type="journal article" date="2004" name="Proc. Natl. Acad. Sci. U.S.A.">
        <title>Genome sequence of the enterobacterial phytopathogen Erwinia carotovora subsp. atroseptica and characterization of virulence factors.</title>
        <authorList>
            <person name="Bell K.S."/>
            <person name="Sebaihia M."/>
            <person name="Pritchard L."/>
            <person name="Holden M.T.G."/>
            <person name="Hyman L.J."/>
            <person name="Holeva M.C."/>
            <person name="Thomson N.R."/>
            <person name="Bentley S.D."/>
            <person name="Churcher L.J.C."/>
            <person name="Mungall K."/>
            <person name="Atkin R."/>
            <person name="Bason N."/>
            <person name="Brooks K."/>
            <person name="Chillingworth T."/>
            <person name="Clark K."/>
            <person name="Doggett J."/>
            <person name="Fraser A."/>
            <person name="Hance Z."/>
            <person name="Hauser H."/>
            <person name="Jagels K."/>
            <person name="Moule S."/>
            <person name="Norbertczak H."/>
            <person name="Ormond D."/>
            <person name="Price C."/>
            <person name="Quail M.A."/>
            <person name="Sanders M."/>
            <person name="Walker D."/>
            <person name="Whitehead S."/>
            <person name="Salmond G.P.C."/>
            <person name="Birch P.R.J."/>
            <person name="Parkhill J."/>
            <person name="Toth I.K."/>
        </authorList>
    </citation>
    <scope>NUCLEOTIDE SEQUENCE [LARGE SCALE GENOMIC DNA]</scope>
    <source>
        <strain>SCRI 1043 / ATCC BAA-672</strain>
    </source>
</reference>
<dbReference type="EC" id="2.7.1.35" evidence="1"/>
<dbReference type="EMBL" id="BX950851">
    <property type="protein sequence ID" value="CAG74840.1"/>
    <property type="molecule type" value="Genomic_DNA"/>
</dbReference>
<dbReference type="RefSeq" id="WP_011093503.1">
    <property type="nucleotide sequence ID" value="NC_004547.2"/>
</dbReference>
<dbReference type="SMR" id="Q6D5V1"/>
<dbReference type="STRING" id="218491.ECA1937"/>
<dbReference type="GeneID" id="57209358"/>
<dbReference type="KEGG" id="eca:ECA1937"/>
<dbReference type="PATRIC" id="fig|218491.5.peg.1970"/>
<dbReference type="eggNOG" id="COG2240">
    <property type="taxonomic scope" value="Bacteria"/>
</dbReference>
<dbReference type="HOGENOM" id="CLU_046496_3_0_6"/>
<dbReference type="OrthoDB" id="9800808at2"/>
<dbReference type="UniPathway" id="UPA01068">
    <property type="reaction ID" value="UER00298"/>
</dbReference>
<dbReference type="Proteomes" id="UP000007966">
    <property type="component" value="Chromosome"/>
</dbReference>
<dbReference type="GO" id="GO:0005829">
    <property type="term" value="C:cytosol"/>
    <property type="evidence" value="ECO:0007669"/>
    <property type="project" value="TreeGrafter"/>
</dbReference>
<dbReference type="GO" id="GO:0005524">
    <property type="term" value="F:ATP binding"/>
    <property type="evidence" value="ECO:0007669"/>
    <property type="project" value="UniProtKB-UniRule"/>
</dbReference>
<dbReference type="GO" id="GO:0000287">
    <property type="term" value="F:magnesium ion binding"/>
    <property type="evidence" value="ECO:0007669"/>
    <property type="project" value="UniProtKB-UniRule"/>
</dbReference>
<dbReference type="GO" id="GO:0008478">
    <property type="term" value="F:pyridoxal kinase activity"/>
    <property type="evidence" value="ECO:0007669"/>
    <property type="project" value="UniProtKB-UniRule"/>
</dbReference>
<dbReference type="GO" id="GO:0009443">
    <property type="term" value="P:pyridoxal 5'-phosphate salvage"/>
    <property type="evidence" value="ECO:0007669"/>
    <property type="project" value="UniProtKB-UniRule"/>
</dbReference>
<dbReference type="CDD" id="cd01173">
    <property type="entry name" value="pyridoxal_pyridoxamine_kinase"/>
    <property type="match status" value="1"/>
</dbReference>
<dbReference type="FunFam" id="3.40.1190.20:FF:000008">
    <property type="entry name" value="Pyridoxal kinase PdxY"/>
    <property type="match status" value="1"/>
</dbReference>
<dbReference type="Gene3D" id="3.40.1190.20">
    <property type="match status" value="1"/>
</dbReference>
<dbReference type="HAMAP" id="MF_01639">
    <property type="entry name" value="PdxY"/>
    <property type="match status" value="1"/>
</dbReference>
<dbReference type="InterPro" id="IPR013749">
    <property type="entry name" value="PM/HMP-P_kinase-1"/>
</dbReference>
<dbReference type="InterPro" id="IPR004625">
    <property type="entry name" value="PyrdxlKinase"/>
</dbReference>
<dbReference type="InterPro" id="IPR023685">
    <property type="entry name" value="Pyridoxal_kinase_PdxY"/>
</dbReference>
<dbReference type="InterPro" id="IPR029056">
    <property type="entry name" value="Ribokinase-like"/>
</dbReference>
<dbReference type="NCBIfam" id="NF004398">
    <property type="entry name" value="PRK05756.1"/>
    <property type="match status" value="1"/>
</dbReference>
<dbReference type="NCBIfam" id="TIGR00687">
    <property type="entry name" value="pyridox_kin"/>
    <property type="match status" value="1"/>
</dbReference>
<dbReference type="PANTHER" id="PTHR10534">
    <property type="entry name" value="PYRIDOXAL KINASE"/>
    <property type="match status" value="1"/>
</dbReference>
<dbReference type="PANTHER" id="PTHR10534:SF2">
    <property type="entry name" value="PYRIDOXAL KINASE"/>
    <property type="match status" value="1"/>
</dbReference>
<dbReference type="Pfam" id="PF08543">
    <property type="entry name" value="Phos_pyr_kin"/>
    <property type="match status" value="1"/>
</dbReference>
<dbReference type="SUPFAM" id="SSF53613">
    <property type="entry name" value="Ribokinase-like"/>
    <property type="match status" value="1"/>
</dbReference>
<gene>
    <name evidence="1" type="primary">pdxY</name>
    <name type="ordered locus">ECA1937</name>
</gene>